<proteinExistence type="inferred from homology"/>
<comment type="function">
    <text evidence="3">This recombinant peptide reversibly and dose-dependently inhibits the transient outward potassium current (I(To)) of rabbit atrial myocyte and prolongs the action potential duration of rabbit atrial myocyte without affecting the action potential amplitude. Thus, the voltage-gated potassium channels Kv4.1/KCND1, Kv4.2/KCND2, Kv4.3/KCND3 may be the target of this toxin.</text>
</comment>
<comment type="subcellular location">
    <subcellularLocation>
        <location evidence="5 6">Secreted</location>
    </subcellularLocation>
</comment>
<comment type="tissue specificity">
    <text evidence="5 6">Expressed by the venom gland.</text>
</comment>
<comment type="similarity">
    <text evidence="4">Belongs to the long chain scorpion toxin family. Class 2 subfamily.</text>
</comment>
<comment type="caution">
    <text evidence="4">It is uncertain whether Met-1 or Met-2 is the initiator.</text>
</comment>
<dbReference type="EMBL" id="AF155371">
    <property type="protein sequence ID" value="AAF31480.1"/>
    <property type="molecule type" value="mRNA"/>
</dbReference>
<dbReference type="EMBL" id="AF153691">
    <property type="protein sequence ID" value="AAP33618.1"/>
    <property type="molecule type" value="mRNA"/>
</dbReference>
<dbReference type="EMBL" id="AF380939">
    <property type="protein sequence ID" value="AAL58197.1"/>
    <property type="molecule type" value="Genomic_DNA"/>
</dbReference>
<dbReference type="EMBL" id="AF155365">
    <property type="protein sequence ID" value="AAK61815.1"/>
    <property type="molecule type" value="mRNA"/>
</dbReference>
<dbReference type="EMBL" id="AY055475">
    <property type="protein sequence ID" value="AAL24435.1"/>
    <property type="molecule type" value="mRNA"/>
</dbReference>
<dbReference type="SMR" id="Q9NJC6"/>
<dbReference type="TCDB" id="1.C.47.3.2">
    <property type="family name" value="the insect/fungal defensin (insect/fungal defensin) family"/>
</dbReference>
<dbReference type="GO" id="GO:0005576">
    <property type="term" value="C:extracellular region"/>
    <property type="evidence" value="ECO:0007669"/>
    <property type="project" value="UniProtKB-SubCell"/>
</dbReference>
<dbReference type="GO" id="GO:0015459">
    <property type="term" value="F:potassium channel regulator activity"/>
    <property type="evidence" value="ECO:0007669"/>
    <property type="project" value="UniProtKB-KW"/>
</dbReference>
<dbReference type="GO" id="GO:0090729">
    <property type="term" value="F:toxin activity"/>
    <property type="evidence" value="ECO:0007669"/>
    <property type="project" value="UniProtKB-KW"/>
</dbReference>
<dbReference type="InterPro" id="IPR029237">
    <property type="entry name" value="Long_scorpion_toxin_alpha/beta"/>
</dbReference>
<dbReference type="Pfam" id="PF14866">
    <property type="entry name" value="Scorpion_toxin_alpha-beta"/>
    <property type="match status" value="1"/>
</dbReference>
<dbReference type="PROSITE" id="PS51862">
    <property type="entry name" value="BSPN_CSAB"/>
    <property type="match status" value="1"/>
</dbReference>
<evidence type="ECO:0000255" key="1"/>
<evidence type="ECO:0000255" key="2">
    <source>
        <dbReference type="PROSITE-ProRule" id="PRU01209"/>
    </source>
</evidence>
<evidence type="ECO:0000269" key="3">
    <source>
    </source>
</evidence>
<evidence type="ECO:0000305" key="4"/>
<evidence type="ECO:0000305" key="5">
    <source>
    </source>
</evidence>
<evidence type="ECO:0000305" key="6">
    <source>
    </source>
</evidence>
<keyword id="KW-1015">Disulfide bond</keyword>
<keyword id="KW-0872">Ion channel impairing toxin</keyword>
<keyword id="KW-0528">Neurotoxin</keyword>
<keyword id="KW-0632">Potassium channel impairing toxin</keyword>
<keyword id="KW-0964">Secreted</keyword>
<keyword id="KW-0732">Signal</keyword>
<keyword id="KW-0800">Toxin</keyword>
<keyword id="KW-1220">Voltage-gated potassium channel impairing toxin</keyword>
<name>KBX2_OLIMR</name>
<accession>Q9NJC6</accession>
<accession>Q8WS33</accession>
<accession>Q95P93</accession>
<reference key="1">
    <citation type="journal article" date="1999" name="FEBS Lett.">
        <title>Molecular cloning and sequencing of two 'short chain' and two 'long chain' K(+) channel-blocking peptides from the Chinese scorpion Buthus martensii Karsch.</title>
        <authorList>
            <person name="Zhu S.-Y."/>
            <person name="Li W.-X."/>
            <person name="Zeng X.-C."/>
            <person name="Jiang D.-H."/>
            <person name="Mao X."/>
            <person name="Liu H."/>
        </authorList>
    </citation>
    <scope>NUCLEOTIDE SEQUENCE [MRNA]</scope>
    <source>
        <tissue>Venom gland</tissue>
    </source>
</reference>
<reference key="2">
    <citation type="journal article" date="2001" name="FEBS Lett.">
        <title>A naturally occurring non-coding fusion transcript derived from scorpion venom gland: implication for the regulation of scorpion toxin gene expression.</title>
        <authorList>
            <person name="Zhu S.-Y."/>
            <person name="Li W.-X."/>
            <person name="Cao Z."/>
        </authorList>
    </citation>
    <scope>NUCLEOTIDE SEQUENCE [GENOMIC DNA] OF 30-90</scope>
</reference>
<reference key="3">
    <citation type="journal article" date="2002" name="FEBS Lett.">
        <title>Evidence that BmTXK beta-BmKCT cDNA from Chinese scorpion Buthus martensii Karsch is an artifact generated in the reverse transcription process.</title>
        <authorList>
            <person name="Zeng X.-C."/>
            <person name="Wang S.-X."/>
        </authorList>
    </citation>
    <scope>NUCLEOTIDE SEQUENCE [MRNA] OF 1-28</scope>
    <source>
        <tissue>Venom gland</tissue>
    </source>
</reference>
<reference key="4">
    <citation type="journal article" date="2003" name="Peptides">
        <title>Expression, purification and functional characterization of a recombinant scorpion venom peptide BmTXKbeta.</title>
        <authorList>
            <person name="Cao Z."/>
            <person name="Xiao F."/>
            <person name="Peng F."/>
            <person name="Jiang D."/>
            <person name="Mao X."/>
            <person name="Liu H."/>
            <person name="Li W."/>
            <person name="Hu D."/>
            <person name="Wang T."/>
        </authorList>
    </citation>
    <scope>FUNCTION</scope>
</reference>
<organism>
    <name type="scientific">Olivierus martensii</name>
    <name type="common">Manchurian scorpion</name>
    <name type="synonym">Mesobuthus martensii</name>
    <dbReference type="NCBI Taxonomy" id="34649"/>
    <lineage>
        <taxon>Eukaryota</taxon>
        <taxon>Metazoa</taxon>
        <taxon>Ecdysozoa</taxon>
        <taxon>Arthropoda</taxon>
        <taxon>Chelicerata</taxon>
        <taxon>Arachnida</taxon>
        <taxon>Scorpiones</taxon>
        <taxon>Buthida</taxon>
        <taxon>Buthoidea</taxon>
        <taxon>Buthidae</taxon>
        <taxon>Olivierus</taxon>
    </lineage>
</organism>
<feature type="signal peptide" evidence="1">
    <location>
        <begin position="1"/>
        <end position="22"/>
    </location>
</feature>
<feature type="propeptide" id="PRO_0000035344" evidence="4">
    <location>
        <begin position="23"/>
        <end position="29"/>
    </location>
</feature>
<feature type="chain" id="PRO_0000035345" description="Potassium channel toxin BmTXK-beta">
    <location>
        <begin position="30"/>
        <end position="90"/>
    </location>
</feature>
<feature type="domain" description="BetaSPN-type CS-alpha/beta" evidence="2">
    <location>
        <begin position="55"/>
        <end position="90"/>
    </location>
</feature>
<feature type="disulfide bond" evidence="2">
    <location>
        <begin position="58"/>
        <end position="78"/>
    </location>
</feature>
<feature type="disulfide bond" evidence="2">
    <location>
        <begin position="65"/>
        <end position="83"/>
    </location>
</feature>
<feature type="disulfide bond" evidence="2">
    <location>
        <begin position="69"/>
        <end position="85"/>
    </location>
</feature>
<feature type="sequence conflict" description="In Ref. 3; AAL24435." evidence="4" ref="3">
    <original>I</original>
    <variation>M</variation>
    <location>
        <position position="28"/>
    </location>
</feature>
<sequence length="90" mass="10431">MMKQQFFLFLAVIVMISSVIEAGRGKEIMKNIKEKLTEVKDKMKHSWNKLTSMSEYACPVIEKWCEDHCAAKKAIGKCEDTECKCLKLRK</sequence>
<protein>
    <recommendedName>
        <fullName>Potassium channel toxin BmTXK-beta</fullName>
    </recommendedName>
    <alternativeName>
        <fullName>BmKLK</fullName>
    </alternativeName>
    <alternativeName>
        <fullName>Potassium channel toxin beta-KTx 3</fullName>
    </alternativeName>
    <alternativeName>
        <fullName>Toxin BmTX K-beta</fullName>
        <shortName>BmTXKbeta</shortName>
    </alternativeName>
</protein>